<sequence length="289" mass="32155">MRFDEAYSGKVFIMSRSNYEKSKAVIFGMPMDWTVSFRPSSRFGPNRIREASLGLEEYSPYMDKHLEEVAYFDAGDMLLPFGNPQRSLEMIESYVDKLLADQKMPIGLGGEHLVSWPIFKAMHKIYPDMAIIHIDAHADLREEYEGEPLSHSTPIRKACSLIGPENVYSFGIRSGMREEFQYAKDSGMYMAKFEVATPLKEVLPKLAGRNVYVTIDIDVLDPAFAPGTGTAEAGGISSKELLEAIVAIAHSDVNVIGADLVEVAPAYDPSEKTPIAASKFVREMLLGWV</sequence>
<gene>
    <name type="primary">speB</name>
    <name type="ordered locus">BH3810</name>
</gene>
<evidence type="ECO:0000250" key="1"/>
<evidence type="ECO:0000255" key="2">
    <source>
        <dbReference type="PROSITE-ProRule" id="PRU00742"/>
    </source>
</evidence>
<evidence type="ECO:0000305" key="3"/>
<dbReference type="EC" id="3.5.3.11"/>
<dbReference type="EMBL" id="BA000004">
    <property type="protein sequence ID" value="BAB07529.1"/>
    <property type="status" value="ALT_FRAME"/>
    <property type="molecule type" value="Genomic_DNA"/>
</dbReference>
<dbReference type="PIR" id="B84126">
    <property type="entry name" value="B84126"/>
</dbReference>
<dbReference type="SMR" id="Q9K6B9"/>
<dbReference type="STRING" id="272558.gene:10729723"/>
<dbReference type="KEGG" id="bha:BH3810"/>
<dbReference type="eggNOG" id="COG0010">
    <property type="taxonomic scope" value="Bacteria"/>
</dbReference>
<dbReference type="HOGENOM" id="CLU_3040414_0_0_9"/>
<dbReference type="UniPathway" id="UPA00534">
    <property type="reaction ID" value="UER00287"/>
</dbReference>
<dbReference type="Proteomes" id="UP000001258">
    <property type="component" value="Chromosome"/>
</dbReference>
<dbReference type="GO" id="GO:0008783">
    <property type="term" value="F:agmatinase activity"/>
    <property type="evidence" value="ECO:0007669"/>
    <property type="project" value="UniProtKB-EC"/>
</dbReference>
<dbReference type="GO" id="GO:0046872">
    <property type="term" value="F:metal ion binding"/>
    <property type="evidence" value="ECO:0007669"/>
    <property type="project" value="UniProtKB-KW"/>
</dbReference>
<dbReference type="GO" id="GO:0033389">
    <property type="term" value="P:putrescine biosynthetic process from arginine, via agmatine"/>
    <property type="evidence" value="ECO:0007669"/>
    <property type="project" value="TreeGrafter"/>
</dbReference>
<dbReference type="GO" id="GO:0008295">
    <property type="term" value="P:spermidine biosynthetic process"/>
    <property type="evidence" value="ECO:0007669"/>
    <property type="project" value="UniProtKB-KW"/>
</dbReference>
<dbReference type="CDD" id="cd11593">
    <property type="entry name" value="Agmatinase-like_2"/>
    <property type="match status" value="1"/>
</dbReference>
<dbReference type="FunFam" id="3.40.800.10:FF:000004">
    <property type="entry name" value="Agmatinase"/>
    <property type="match status" value="1"/>
</dbReference>
<dbReference type="Gene3D" id="3.40.800.10">
    <property type="entry name" value="Ureohydrolase domain"/>
    <property type="match status" value="1"/>
</dbReference>
<dbReference type="InterPro" id="IPR005925">
    <property type="entry name" value="Agmatinase-rel"/>
</dbReference>
<dbReference type="InterPro" id="IPR006035">
    <property type="entry name" value="Ureohydrolase"/>
</dbReference>
<dbReference type="InterPro" id="IPR023696">
    <property type="entry name" value="Ureohydrolase_dom_sf"/>
</dbReference>
<dbReference type="InterPro" id="IPR020855">
    <property type="entry name" value="Ureohydrolase_Mn_BS"/>
</dbReference>
<dbReference type="NCBIfam" id="TIGR01230">
    <property type="entry name" value="agmatinase"/>
    <property type="match status" value="1"/>
</dbReference>
<dbReference type="PANTHER" id="PTHR11358">
    <property type="entry name" value="ARGINASE/AGMATINASE"/>
    <property type="match status" value="1"/>
</dbReference>
<dbReference type="PANTHER" id="PTHR11358:SF26">
    <property type="entry name" value="GUANIDINO ACID HYDROLASE, MITOCHONDRIAL"/>
    <property type="match status" value="1"/>
</dbReference>
<dbReference type="Pfam" id="PF00491">
    <property type="entry name" value="Arginase"/>
    <property type="match status" value="1"/>
</dbReference>
<dbReference type="PIRSF" id="PIRSF036979">
    <property type="entry name" value="Arginase"/>
    <property type="match status" value="1"/>
</dbReference>
<dbReference type="SUPFAM" id="SSF52768">
    <property type="entry name" value="Arginase/deacetylase"/>
    <property type="match status" value="1"/>
</dbReference>
<dbReference type="PROSITE" id="PS01053">
    <property type="entry name" value="ARGINASE_1"/>
    <property type="match status" value="1"/>
</dbReference>
<dbReference type="PROSITE" id="PS51409">
    <property type="entry name" value="ARGINASE_2"/>
    <property type="match status" value="1"/>
</dbReference>
<feature type="chain" id="PRO_0000173727" description="Agmatinase">
    <location>
        <begin position="1"/>
        <end position="289"/>
    </location>
</feature>
<feature type="binding site" evidence="2">
    <location>
        <position position="112"/>
    </location>
    <ligand>
        <name>Mn(2+)</name>
        <dbReference type="ChEBI" id="CHEBI:29035"/>
    </ligand>
</feature>
<feature type="binding site" evidence="2">
    <location>
        <position position="135"/>
    </location>
    <ligand>
        <name>Mn(2+)</name>
        <dbReference type="ChEBI" id="CHEBI:29035"/>
    </ligand>
</feature>
<feature type="binding site" evidence="2">
    <location>
        <position position="137"/>
    </location>
    <ligand>
        <name>Mn(2+)</name>
        <dbReference type="ChEBI" id="CHEBI:29035"/>
    </ligand>
</feature>
<feature type="binding site" evidence="2">
    <location>
        <position position="139"/>
    </location>
    <ligand>
        <name>Mn(2+)</name>
        <dbReference type="ChEBI" id="CHEBI:29035"/>
    </ligand>
</feature>
<feature type="binding site" evidence="2">
    <location>
        <position position="216"/>
    </location>
    <ligand>
        <name>Mn(2+)</name>
        <dbReference type="ChEBI" id="CHEBI:29035"/>
    </ligand>
</feature>
<feature type="binding site" evidence="2">
    <location>
        <position position="218"/>
    </location>
    <ligand>
        <name>Mn(2+)</name>
        <dbReference type="ChEBI" id="CHEBI:29035"/>
    </ligand>
</feature>
<name>SPEB_HALH5</name>
<comment type="function">
    <text evidence="1">Catalyzes the formation of putrescine from agmatine.</text>
</comment>
<comment type="catalytic activity">
    <reaction>
        <text>agmatine + H2O = urea + putrescine</text>
        <dbReference type="Rhea" id="RHEA:13929"/>
        <dbReference type="ChEBI" id="CHEBI:15377"/>
        <dbReference type="ChEBI" id="CHEBI:16199"/>
        <dbReference type="ChEBI" id="CHEBI:58145"/>
        <dbReference type="ChEBI" id="CHEBI:326268"/>
        <dbReference type="EC" id="3.5.3.11"/>
    </reaction>
</comment>
<comment type="cofactor">
    <cofactor evidence="2">
        <name>Mn(2+)</name>
        <dbReference type="ChEBI" id="CHEBI:29035"/>
    </cofactor>
</comment>
<comment type="pathway">
    <text>Amine and polyamine biosynthesis; putrescine biosynthesis via agmatine pathway; putrescine from agmatine: step 1/1.</text>
</comment>
<comment type="similarity">
    <text evidence="2">Belongs to the arginase family. Agmatinase subfamily.</text>
</comment>
<comment type="sequence caution" evidence="3">
    <conflict type="frameshift">
        <sequence resource="EMBL-CDS" id="BAB07529"/>
    </conflict>
</comment>
<proteinExistence type="inferred from homology"/>
<keyword id="KW-0378">Hydrolase</keyword>
<keyword id="KW-0464">Manganese</keyword>
<keyword id="KW-0479">Metal-binding</keyword>
<keyword id="KW-0620">Polyamine biosynthesis</keyword>
<keyword id="KW-0661">Putrescine biosynthesis</keyword>
<keyword id="KW-1185">Reference proteome</keyword>
<keyword id="KW-0745">Spermidine biosynthesis</keyword>
<reference key="1">
    <citation type="journal article" date="2000" name="Nucleic Acids Res.">
        <title>Complete genome sequence of the alkaliphilic bacterium Bacillus halodurans and genomic sequence comparison with Bacillus subtilis.</title>
        <authorList>
            <person name="Takami H."/>
            <person name="Nakasone K."/>
            <person name="Takaki Y."/>
            <person name="Maeno G."/>
            <person name="Sasaki R."/>
            <person name="Masui N."/>
            <person name="Fuji F."/>
            <person name="Hirama C."/>
            <person name="Nakamura Y."/>
            <person name="Ogasawara N."/>
            <person name="Kuhara S."/>
            <person name="Horikoshi K."/>
        </authorList>
    </citation>
    <scope>NUCLEOTIDE SEQUENCE [LARGE SCALE GENOMIC DNA]</scope>
    <source>
        <strain>ATCC BAA-125 / DSM 18197 / FERM 7344 / JCM 9153 / C-125</strain>
    </source>
</reference>
<protein>
    <recommendedName>
        <fullName>Agmatinase</fullName>
        <ecNumber>3.5.3.11</ecNumber>
    </recommendedName>
    <alternativeName>
        <fullName>Agmatine ureohydrolase</fullName>
        <shortName>AUH</shortName>
    </alternativeName>
</protein>
<organism>
    <name type="scientific">Halalkalibacterium halodurans (strain ATCC BAA-125 / DSM 18197 / FERM 7344 / JCM 9153 / C-125)</name>
    <name type="common">Bacillus halodurans</name>
    <dbReference type="NCBI Taxonomy" id="272558"/>
    <lineage>
        <taxon>Bacteria</taxon>
        <taxon>Bacillati</taxon>
        <taxon>Bacillota</taxon>
        <taxon>Bacilli</taxon>
        <taxon>Bacillales</taxon>
        <taxon>Bacillaceae</taxon>
        <taxon>Halalkalibacterium (ex Joshi et al. 2022)</taxon>
    </lineage>
</organism>
<accession>Q9K6B9</accession>